<accession>Q4JB26</accession>
<feature type="chain" id="PRO_0000050155" description="Exosome complex component Rrp4">
    <location>
        <begin position="1"/>
        <end position="249"/>
    </location>
</feature>
<feature type="domain" description="S1 motif" evidence="1">
    <location>
        <begin position="72"/>
        <end position="143"/>
    </location>
</feature>
<feature type="domain" description="KH" evidence="1">
    <location>
        <begin position="151"/>
        <end position="213"/>
    </location>
</feature>
<name>RRP4_SULAC</name>
<reference key="1">
    <citation type="journal article" date="2005" name="J. Bacteriol.">
        <title>The genome of Sulfolobus acidocaldarius, a model organism of the Crenarchaeota.</title>
        <authorList>
            <person name="Chen L."/>
            <person name="Bruegger K."/>
            <person name="Skovgaard M."/>
            <person name="Redder P."/>
            <person name="She Q."/>
            <person name="Torarinsson E."/>
            <person name="Greve B."/>
            <person name="Awayez M."/>
            <person name="Zibat A."/>
            <person name="Klenk H.-P."/>
            <person name="Garrett R.A."/>
        </authorList>
    </citation>
    <scope>NUCLEOTIDE SEQUENCE [LARGE SCALE GENOMIC DNA]</scope>
    <source>
        <strain>ATCC 33909 / DSM 639 / JCM 8929 / NBRC 15157 / NCIMB 11770</strain>
    </source>
</reference>
<comment type="function">
    <text evidence="1">Non-catalytic component of the exosome, which is a complex involved in RNA degradation. Increases the RNA binding and the efficiency of RNA degradation. Confers strong poly(A) specificity to the exosome.</text>
</comment>
<comment type="subunit">
    <text evidence="1">Component of the archaeal exosome complex. Forms a trimer of Rrp4 and/or Csl4 subunits. The trimer associates with a hexameric ring-like arrangement composed of 3 Rrp41-Rrp42 heterodimers.</text>
</comment>
<comment type="subcellular location">
    <subcellularLocation>
        <location evidence="1">Cytoplasm</location>
    </subcellularLocation>
</comment>
<comment type="similarity">
    <text evidence="1">Belongs to the RRP4 family.</text>
</comment>
<dbReference type="EMBL" id="CP000077">
    <property type="protein sequence ID" value="AAY80003.1"/>
    <property type="molecule type" value="Genomic_DNA"/>
</dbReference>
<dbReference type="RefSeq" id="WP_011277505.1">
    <property type="nucleotide sequence ID" value="NC_007181.1"/>
</dbReference>
<dbReference type="SMR" id="Q4JB26"/>
<dbReference type="STRING" id="330779.Saci_0611"/>
<dbReference type="GeneID" id="14551132"/>
<dbReference type="GeneID" id="78440954"/>
<dbReference type="KEGG" id="sai:Saci_0611"/>
<dbReference type="PATRIC" id="fig|330779.12.peg.590"/>
<dbReference type="eggNOG" id="arCOG00678">
    <property type="taxonomic scope" value="Archaea"/>
</dbReference>
<dbReference type="HOGENOM" id="CLU_071769_0_0_2"/>
<dbReference type="Proteomes" id="UP000001018">
    <property type="component" value="Chromosome"/>
</dbReference>
<dbReference type="GO" id="GO:0005737">
    <property type="term" value="C:cytoplasm"/>
    <property type="evidence" value="ECO:0007669"/>
    <property type="project" value="UniProtKB-SubCell"/>
</dbReference>
<dbReference type="GO" id="GO:0000178">
    <property type="term" value="C:exosome (RNase complex)"/>
    <property type="evidence" value="ECO:0007669"/>
    <property type="project" value="UniProtKB-KW"/>
</dbReference>
<dbReference type="GO" id="GO:0008143">
    <property type="term" value="F:poly(A) binding"/>
    <property type="evidence" value="ECO:0007669"/>
    <property type="project" value="InterPro"/>
</dbReference>
<dbReference type="GO" id="GO:0071034">
    <property type="term" value="P:CUT catabolic process"/>
    <property type="evidence" value="ECO:0007669"/>
    <property type="project" value="TreeGrafter"/>
</dbReference>
<dbReference type="GO" id="GO:0000467">
    <property type="term" value="P:exonucleolytic trimming to generate mature 3'-end of 5.8S rRNA from tricistronic rRNA transcript (SSU-rRNA, 5.8S rRNA, LSU-rRNA)"/>
    <property type="evidence" value="ECO:0007669"/>
    <property type="project" value="TreeGrafter"/>
</dbReference>
<dbReference type="GO" id="GO:0071051">
    <property type="term" value="P:poly(A)-dependent snoRNA 3'-end processing"/>
    <property type="evidence" value="ECO:0007669"/>
    <property type="project" value="TreeGrafter"/>
</dbReference>
<dbReference type="GO" id="GO:0006401">
    <property type="term" value="P:RNA catabolic process"/>
    <property type="evidence" value="ECO:0007669"/>
    <property type="project" value="UniProtKB-UniRule"/>
</dbReference>
<dbReference type="GO" id="GO:0034475">
    <property type="term" value="P:U4 snRNA 3'-end processing"/>
    <property type="evidence" value="ECO:0007669"/>
    <property type="project" value="TreeGrafter"/>
</dbReference>
<dbReference type="CDD" id="cd22524">
    <property type="entry name" value="KH-I_Rrp4_prokar"/>
    <property type="match status" value="1"/>
</dbReference>
<dbReference type="CDD" id="cd05789">
    <property type="entry name" value="S1_Rrp4"/>
    <property type="match status" value="1"/>
</dbReference>
<dbReference type="Gene3D" id="2.40.50.100">
    <property type="match status" value="1"/>
</dbReference>
<dbReference type="Gene3D" id="3.30.1370.10">
    <property type="entry name" value="K Homology domain, type 1"/>
    <property type="match status" value="1"/>
</dbReference>
<dbReference type="Gene3D" id="2.40.50.140">
    <property type="entry name" value="Nucleic acid-binding proteins"/>
    <property type="match status" value="1"/>
</dbReference>
<dbReference type="HAMAP" id="MF_00623">
    <property type="entry name" value="Exosome_Rrp4"/>
    <property type="match status" value="1"/>
</dbReference>
<dbReference type="InterPro" id="IPR026699">
    <property type="entry name" value="Exosome_RNA_bind1/RRP40/RRP4"/>
</dbReference>
<dbReference type="InterPro" id="IPR004087">
    <property type="entry name" value="KH_dom"/>
</dbReference>
<dbReference type="InterPro" id="IPR004088">
    <property type="entry name" value="KH_dom_type_1"/>
</dbReference>
<dbReference type="InterPro" id="IPR036612">
    <property type="entry name" value="KH_dom_type_1_sf"/>
</dbReference>
<dbReference type="InterPro" id="IPR012340">
    <property type="entry name" value="NA-bd_OB-fold"/>
</dbReference>
<dbReference type="InterPro" id="IPR023474">
    <property type="entry name" value="Rrp4"/>
</dbReference>
<dbReference type="InterPro" id="IPR054371">
    <property type="entry name" value="RRP4_N"/>
</dbReference>
<dbReference type="InterPro" id="IPR048565">
    <property type="entry name" value="RRP4_S1"/>
</dbReference>
<dbReference type="InterPro" id="IPR003029">
    <property type="entry name" value="S1_domain"/>
</dbReference>
<dbReference type="NCBIfam" id="NF003181">
    <property type="entry name" value="PRK04163.1-1"/>
    <property type="match status" value="1"/>
</dbReference>
<dbReference type="PANTHER" id="PTHR21321:SF4">
    <property type="entry name" value="EXOSOME COMPLEX COMPONENT RRP4"/>
    <property type="match status" value="1"/>
</dbReference>
<dbReference type="PANTHER" id="PTHR21321">
    <property type="entry name" value="PNAS-3 RELATED"/>
    <property type="match status" value="1"/>
</dbReference>
<dbReference type="Pfam" id="PF22625">
    <property type="entry name" value="ECR1_N_2"/>
    <property type="match status" value="1"/>
</dbReference>
<dbReference type="Pfam" id="PF15985">
    <property type="entry name" value="KH_6"/>
    <property type="match status" value="1"/>
</dbReference>
<dbReference type="SMART" id="SM00322">
    <property type="entry name" value="KH"/>
    <property type="match status" value="1"/>
</dbReference>
<dbReference type="SMART" id="SM00316">
    <property type="entry name" value="S1"/>
    <property type="match status" value="1"/>
</dbReference>
<dbReference type="SUPFAM" id="SSF54791">
    <property type="entry name" value="Eukaryotic type KH-domain (KH-domain type I)"/>
    <property type="match status" value="1"/>
</dbReference>
<dbReference type="SUPFAM" id="SSF50249">
    <property type="entry name" value="Nucleic acid-binding proteins"/>
    <property type="match status" value="1"/>
</dbReference>
<dbReference type="SUPFAM" id="SSF110324">
    <property type="entry name" value="Ribosomal L27 protein-like"/>
    <property type="match status" value="1"/>
</dbReference>
<dbReference type="PROSITE" id="PS50126">
    <property type="entry name" value="S1"/>
    <property type="match status" value="1"/>
</dbReference>
<proteinExistence type="inferred from homology"/>
<organism>
    <name type="scientific">Sulfolobus acidocaldarius (strain ATCC 33909 / DSM 639 / JCM 8929 / NBRC 15157 / NCIMB 11770)</name>
    <dbReference type="NCBI Taxonomy" id="330779"/>
    <lineage>
        <taxon>Archaea</taxon>
        <taxon>Thermoproteota</taxon>
        <taxon>Thermoprotei</taxon>
        <taxon>Sulfolobales</taxon>
        <taxon>Sulfolobaceae</taxon>
        <taxon>Sulfolobus</taxon>
    </lineage>
</organism>
<protein>
    <recommendedName>
        <fullName evidence="1">Exosome complex component Rrp4</fullName>
    </recommendedName>
</protein>
<evidence type="ECO:0000255" key="1">
    <source>
        <dbReference type="HAMAP-Rule" id="MF_00623"/>
    </source>
</evidence>
<gene>
    <name evidence="1" type="primary">rrp4</name>
    <name type="ordered locus">Saci_0611</name>
</gene>
<keyword id="KW-0963">Cytoplasm</keyword>
<keyword id="KW-0271">Exosome</keyword>
<keyword id="KW-1185">Reference proteome</keyword>
<keyword id="KW-0694">RNA-binding</keyword>
<sequence length="249" mass="27725">MSQANKIYFEDRSIVTPGDLIAEGEFQVPWSPYYYKVNGKYYSAITGLITVKDGSIFEVIPLESSRYYPKVGDTIIGLVEDIEIYGWVIDIKSFYSAYLPASSLLGRPISPGEDVRRYLDVGDYVIAKIEAFDRTISPVLTVKGKGLGRIPLGTVMDIMPVKVPRVIGKNRSMIEVLTSESGCEIFVAQNGRIHIKCANNLIEEALIEAINIIQSESHTKGLTERIRNFLKQKLGVIRNDSAPKTEANT</sequence>